<sequence>MFFLHVRKYKHVIGGLLCLAGCFVISSCSSGRGNKSIDERIHILSMNRMIYDCVSRITGDRVKNIVLIDGSIDPHSYEMVKGDEDRMAISQLIFCNGLGLEHSASLRKHLEGNSKVIDLGARLLDKNCFVLLSEDGFPDPHIWTDMGVWISXVKEMASVLVQQIPQYAEEFQKNAEQILSEMEDLDRWAVRSLATIPEKNRYLVTGHNAFSYFTRRYLSSDEERESGNWKLRCMSPEGLSPEAQISIRDIMRVVEYICANDVGVVFLEDTLNQDALRKIVSCSKSGQKIRLAKSPLYSDNVCDNYFNTFQHNVRTITEELGGTVLE</sequence>
<evidence type="ECO:0000250" key="1">
    <source>
        <dbReference type="UniProtKB" id="Q9S529"/>
    </source>
</evidence>
<evidence type="ECO:0000305" key="2"/>
<reference key="1">
    <citation type="journal article" date="2000" name="Nucleic Acids Res.">
        <title>Genome sequences of Chlamydia trachomatis MoPn and Chlamydia pneumoniae AR39.</title>
        <authorList>
            <person name="Read T.D."/>
            <person name="Brunham R.C."/>
            <person name="Shen C."/>
            <person name="Gill S.R."/>
            <person name="Heidelberg J.F."/>
            <person name="White O."/>
            <person name="Hickey E.K."/>
            <person name="Peterson J.D."/>
            <person name="Utterback T.R."/>
            <person name="Berry K.J."/>
            <person name="Bass S."/>
            <person name="Linher K.D."/>
            <person name="Weidman J.F."/>
            <person name="Khouri H.M."/>
            <person name="Craven B."/>
            <person name="Bowman C."/>
            <person name="Dodson R.J."/>
            <person name="Gwinn M.L."/>
            <person name="Nelson W.C."/>
            <person name="DeBoy R.T."/>
            <person name="Kolonay J.F."/>
            <person name="McClarty G."/>
            <person name="Salzberg S.L."/>
            <person name="Eisen J.A."/>
            <person name="Fraser C.M."/>
        </authorList>
    </citation>
    <scope>NUCLEOTIDE SEQUENCE [LARGE SCALE GENOMIC DNA]</scope>
    <source>
        <strain>MoPn / Nigg</strain>
    </source>
</reference>
<proteinExistence type="inferred from homology"/>
<gene>
    <name evidence="1" type="primary">ytgA</name>
    <name type="ordered locus">TC_0338</name>
</gene>
<dbReference type="EMBL" id="AE002160">
    <property type="protein sequence ID" value="AAF39201.1"/>
    <property type="molecule type" value="Genomic_DNA"/>
</dbReference>
<dbReference type="PIR" id="F81714">
    <property type="entry name" value="F81714"/>
</dbReference>
<dbReference type="RefSeq" id="WP_010904314.1">
    <property type="nucleotide sequence ID" value="NC_002620.2"/>
</dbReference>
<dbReference type="GeneID" id="1246382"/>
<dbReference type="KEGG" id="cmu:TC_0338"/>
<dbReference type="PATRIC" id="fig|243161.6.peg.367"/>
<dbReference type="eggNOG" id="COG0803">
    <property type="taxonomic scope" value="Bacteria"/>
</dbReference>
<dbReference type="HOGENOM" id="CLU_016838_1_1_0"/>
<dbReference type="Proteomes" id="UP000000800">
    <property type="component" value="Chromosome"/>
</dbReference>
<dbReference type="GO" id="GO:0042597">
    <property type="term" value="C:periplasmic space"/>
    <property type="evidence" value="ECO:0007669"/>
    <property type="project" value="UniProtKB-SubCell"/>
</dbReference>
<dbReference type="GO" id="GO:0046872">
    <property type="term" value="F:metal ion binding"/>
    <property type="evidence" value="ECO:0007669"/>
    <property type="project" value="UniProtKB-KW"/>
</dbReference>
<dbReference type="GO" id="GO:0007155">
    <property type="term" value="P:cell adhesion"/>
    <property type="evidence" value="ECO:0007669"/>
    <property type="project" value="InterPro"/>
</dbReference>
<dbReference type="GO" id="GO:0030001">
    <property type="term" value="P:metal ion transport"/>
    <property type="evidence" value="ECO:0007669"/>
    <property type="project" value="InterPro"/>
</dbReference>
<dbReference type="Gene3D" id="3.40.50.1980">
    <property type="entry name" value="Nitrogenase molybdenum iron protein domain"/>
    <property type="match status" value="2"/>
</dbReference>
<dbReference type="InterPro" id="IPR006129">
    <property type="entry name" value="AdhesinB"/>
</dbReference>
<dbReference type="InterPro" id="IPR050492">
    <property type="entry name" value="Bact_metal-bind_prot9"/>
</dbReference>
<dbReference type="InterPro" id="IPR006128">
    <property type="entry name" value="Lipoprotein_PsaA-like"/>
</dbReference>
<dbReference type="InterPro" id="IPR006127">
    <property type="entry name" value="ZnuA-like"/>
</dbReference>
<dbReference type="PANTHER" id="PTHR42953">
    <property type="entry name" value="HIGH-AFFINITY ZINC UPTAKE SYSTEM PROTEIN ZNUA-RELATED"/>
    <property type="match status" value="1"/>
</dbReference>
<dbReference type="PANTHER" id="PTHR42953:SF1">
    <property type="entry name" value="METAL-BINDING PROTEIN HI_0362-RELATED"/>
    <property type="match status" value="1"/>
</dbReference>
<dbReference type="Pfam" id="PF01297">
    <property type="entry name" value="ZnuA"/>
    <property type="match status" value="1"/>
</dbReference>
<dbReference type="PRINTS" id="PR00691">
    <property type="entry name" value="ADHESINB"/>
</dbReference>
<dbReference type="PRINTS" id="PR00690">
    <property type="entry name" value="ADHESNFAMILY"/>
</dbReference>
<dbReference type="SUPFAM" id="SSF53807">
    <property type="entry name" value="Helical backbone' metal receptor"/>
    <property type="match status" value="1"/>
</dbReference>
<dbReference type="PROSITE" id="PS51257">
    <property type="entry name" value="PROKAR_LIPOPROTEIN"/>
    <property type="match status" value="1"/>
</dbReference>
<protein>
    <recommendedName>
        <fullName evidence="1">Metal-binding protein YtgA</fullName>
    </recommendedName>
</protein>
<comment type="function">
    <text evidence="1">Part of the ATP-binding cassette (ABC) transport system YtgABCD involved in metal import. Binds Fe(2+), Mn(2+) and Ni(2+), with a preference for Fe(2+) and delivers them to the membrane permease for translocation into the cytoplasm.</text>
</comment>
<comment type="subunit">
    <text evidence="1">Monomer.</text>
</comment>
<comment type="subcellular location">
    <subcellularLocation>
        <location evidence="1">Periplasm</location>
    </subcellularLocation>
</comment>
<comment type="similarity">
    <text evidence="2">Belongs to the bacterial solute-binding protein 9 family.</text>
</comment>
<feature type="signal peptide" evidence="2">
    <location>
        <begin position="1"/>
        <end position="21"/>
    </location>
</feature>
<feature type="chain" id="PRO_0000031899" description="Metal-binding protein YtgA">
    <location>
        <begin position="22"/>
        <end position="326"/>
    </location>
</feature>
<feature type="binding site" evidence="1">
    <location>
        <position position="75"/>
    </location>
    <ligand>
        <name>Fe(2+)</name>
        <dbReference type="ChEBI" id="CHEBI:29033"/>
    </ligand>
</feature>
<feature type="binding site" evidence="1">
    <location>
        <position position="141"/>
    </location>
    <ligand>
        <name>Fe(2+)</name>
        <dbReference type="ChEBI" id="CHEBI:29033"/>
    </ligand>
</feature>
<feature type="binding site" evidence="1">
    <location>
        <position position="207"/>
    </location>
    <ligand>
        <name>Fe(2+)</name>
        <dbReference type="ChEBI" id="CHEBI:29033"/>
    </ligand>
</feature>
<feature type="binding site" evidence="1">
    <location>
        <position position="299"/>
    </location>
    <ligand>
        <name>Fe(2+)</name>
        <dbReference type="ChEBI" id="CHEBI:29033"/>
    </ligand>
</feature>
<accession>Q9PKX2</accession>
<organism>
    <name type="scientific">Chlamydia muridarum (strain MoPn / Nigg)</name>
    <dbReference type="NCBI Taxonomy" id="243161"/>
    <lineage>
        <taxon>Bacteria</taxon>
        <taxon>Pseudomonadati</taxon>
        <taxon>Chlamydiota</taxon>
        <taxon>Chlamydiia</taxon>
        <taxon>Chlamydiales</taxon>
        <taxon>Chlamydiaceae</taxon>
        <taxon>Chlamydia/Chlamydophila group</taxon>
        <taxon>Chlamydia</taxon>
    </lineage>
</organism>
<keyword id="KW-0408">Iron</keyword>
<keyword id="KW-0479">Metal-binding</keyword>
<keyword id="KW-0574">Periplasm</keyword>
<keyword id="KW-0732">Signal</keyword>
<keyword id="KW-0813">Transport</keyword>
<name>YTGA_CHLMU</name>